<name>ATPF_SODGM</name>
<reference key="1">
    <citation type="journal article" date="2006" name="Genome Res.">
        <title>Massive genome erosion and functional adaptations provide insights into the symbiotic lifestyle of Sodalis glossinidius in the tsetse host.</title>
        <authorList>
            <person name="Toh H."/>
            <person name="Weiss B.L."/>
            <person name="Perkin S.A.H."/>
            <person name="Yamashita A."/>
            <person name="Oshima K."/>
            <person name="Hattori M."/>
            <person name="Aksoy S."/>
        </authorList>
    </citation>
    <scope>NUCLEOTIDE SEQUENCE [LARGE SCALE GENOMIC DNA]</scope>
    <source>
        <strain>morsitans</strain>
    </source>
</reference>
<feature type="chain" id="PRO_0000368778" description="ATP synthase subunit b">
    <location>
        <begin position="1"/>
        <end position="156"/>
    </location>
</feature>
<feature type="transmembrane region" description="Helical" evidence="1">
    <location>
        <begin position="11"/>
        <end position="31"/>
    </location>
</feature>
<keyword id="KW-0066">ATP synthesis</keyword>
<keyword id="KW-0997">Cell inner membrane</keyword>
<keyword id="KW-1003">Cell membrane</keyword>
<keyword id="KW-0138">CF(0)</keyword>
<keyword id="KW-0375">Hydrogen ion transport</keyword>
<keyword id="KW-0406">Ion transport</keyword>
<keyword id="KW-0472">Membrane</keyword>
<keyword id="KW-0812">Transmembrane</keyword>
<keyword id="KW-1133">Transmembrane helix</keyword>
<keyword id="KW-0813">Transport</keyword>
<evidence type="ECO:0000255" key="1">
    <source>
        <dbReference type="HAMAP-Rule" id="MF_01398"/>
    </source>
</evidence>
<gene>
    <name evidence="1" type="primary">atpF</name>
    <name type="ordered locus">SG2410</name>
</gene>
<organism>
    <name type="scientific">Sodalis glossinidius (strain morsitans)</name>
    <dbReference type="NCBI Taxonomy" id="343509"/>
    <lineage>
        <taxon>Bacteria</taxon>
        <taxon>Pseudomonadati</taxon>
        <taxon>Pseudomonadota</taxon>
        <taxon>Gammaproteobacteria</taxon>
        <taxon>Enterobacterales</taxon>
        <taxon>Bruguierivoracaceae</taxon>
        <taxon>Sodalis</taxon>
    </lineage>
</organism>
<accession>Q2NQ90</accession>
<sequence>MNLNATILGQAIAFVLFVLFCMKYVWPPLMASIEKRQKEIADGLASAERAKKDLDIAQAEATDHLKQAKVEAQAIIEQANKRKAQVVDEAKAEAEAERNKILAQAQAEIDAERKRAREELRKQVAMLALAGAEKIIERSVDDAANSDIVDKIVAEL</sequence>
<protein>
    <recommendedName>
        <fullName evidence="1">ATP synthase subunit b</fullName>
    </recommendedName>
    <alternativeName>
        <fullName evidence="1">ATP synthase F(0) sector subunit b</fullName>
    </alternativeName>
    <alternativeName>
        <fullName evidence="1">ATPase subunit I</fullName>
    </alternativeName>
    <alternativeName>
        <fullName evidence="1">F-type ATPase subunit b</fullName>
        <shortName evidence="1">F-ATPase subunit b</shortName>
    </alternativeName>
</protein>
<comment type="function">
    <text evidence="1">F(1)F(0) ATP synthase produces ATP from ADP in the presence of a proton or sodium gradient. F-type ATPases consist of two structural domains, F(1) containing the extramembraneous catalytic core and F(0) containing the membrane proton channel, linked together by a central stalk and a peripheral stalk. During catalysis, ATP synthesis in the catalytic domain of F(1) is coupled via a rotary mechanism of the central stalk subunits to proton translocation.</text>
</comment>
<comment type="function">
    <text evidence="1">Component of the F(0) channel, it forms part of the peripheral stalk, linking F(1) to F(0).</text>
</comment>
<comment type="subunit">
    <text evidence="1">F-type ATPases have 2 components, F(1) - the catalytic core - and F(0) - the membrane proton channel. F(1) has five subunits: alpha(3), beta(3), gamma(1), delta(1), epsilon(1). F(0) has three main subunits: a(1), b(2) and c(10-14). The alpha and beta chains form an alternating ring which encloses part of the gamma chain. F(1) is attached to F(0) by a central stalk formed by the gamma and epsilon chains, while a peripheral stalk is formed by the delta and b chains.</text>
</comment>
<comment type="subcellular location">
    <subcellularLocation>
        <location evidence="1">Cell inner membrane</location>
        <topology evidence="1">Single-pass membrane protein</topology>
    </subcellularLocation>
</comment>
<comment type="similarity">
    <text evidence="1">Belongs to the ATPase B chain family.</text>
</comment>
<dbReference type="EMBL" id="AP008232">
    <property type="protein sequence ID" value="BAE75685.1"/>
    <property type="molecule type" value="Genomic_DNA"/>
</dbReference>
<dbReference type="RefSeq" id="WP_011412215.1">
    <property type="nucleotide sequence ID" value="NC_007712.1"/>
</dbReference>
<dbReference type="SMR" id="Q2NQ90"/>
<dbReference type="STRING" id="343509.SG2410"/>
<dbReference type="KEGG" id="sgl:SG2410"/>
<dbReference type="eggNOG" id="COG0711">
    <property type="taxonomic scope" value="Bacteria"/>
</dbReference>
<dbReference type="HOGENOM" id="CLU_079215_4_5_6"/>
<dbReference type="OrthoDB" id="9788020at2"/>
<dbReference type="BioCyc" id="SGLO343509:SGP1_RS21865-MONOMER"/>
<dbReference type="Proteomes" id="UP000001932">
    <property type="component" value="Chromosome"/>
</dbReference>
<dbReference type="GO" id="GO:0005886">
    <property type="term" value="C:plasma membrane"/>
    <property type="evidence" value="ECO:0007669"/>
    <property type="project" value="UniProtKB-SubCell"/>
</dbReference>
<dbReference type="GO" id="GO:0045259">
    <property type="term" value="C:proton-transporting ATP synthase complex"/>
    <property type="evidence" value="ECO:0007669"/>
    <property type="project" value="UniProtKB-KW"/>
</dbReference>
<dbReference type="GO" id="GO:0046933">
    <property type="term" value="F:proton-transporting ATP synthase activity, rotational mechanism"/>
    <property type="evidence" value="ECO:0007669"/>
    <property type="project" value="UniProtKB-UniRule"/>
</dbReference>
<dbReference type="GO" id="GO:0046961">
    <property type="term" value="F:proton-transporting ATPase activity, rotational mechanism"/>
    <property type="evidence" value="ECO:0007669"/>
    <property type="project" value="TreeGrafter"/>
</dbReference>
<dbReference type="CDD" id="cd06503">
    <property type="entry name" value="ATP-synt_Fo_b"/>
    <property type="match status" value="1"/>
</dbReference>
<dbReference type="FunFam" id="1.20.5.620:FF:000001">
    <property type="entry name" value="ATP synthase subunit b"/>
    <property type="match status" value="1"/>
</dbReference>
<dbReference type="Gene3D" id="1.20.5.620">
    <property type="entry name" value="F1F0 ATP synthase subunit B, membrane domain"/>
    <property type="match status" value="1"/>
</dbReference>
<dbReference type="HAMAP" id="MF_01398">
    <property type="entry name" value="ATP_synth_b_bprime"/>
    <property type="match status" value="1"/>
</dbReference>
<dbReference type="InterPro" id="IPR028987">
    <property type="entry name" value="ATP_synth_B-like_membr_sf"/>
</dbReference>
<dbReference type="InterPro" id="IPR002146">
    <property type="entry name" value="ATP_synth_b/b'su_bac/chlpt"/>
</dbReference>
<dbReference type="InterPro" id="IPR005864">
    <property type="entry name" value="ATP_synth_F0_bsu_bac"/>
</dbReference>
<dbReference type="InterPro" id="IPR050059">
    <property type="entry name" value="ATP_synthase_B_chain"/>
</dbReference>
<dbReference type="NCBIfam" id="TIGR01144">
    <property type="entry name" value="ATP_synt_b"/>
    <property type="match status" value="1"/>
</dbReference>
<dbReference type="NCBIfam" id="NF004411">
    <property type="entry name" value="PRK05759.1-2"/>
    <property type="match status" value="1"/>
</dbReference>
<dbReference type="NCBIfam" id="NF004413">
    <property type="entry name" value="PRK05759.1-4"/>
    <property type="match status" value="1"/>
</dbReference>
<dbReference type="PANTHER" id="PTHR33445:SF1">
    <property type="entry name" value="ATP SYNTHASE SUBUNIT B"/>
    <property type="match status" value="1"/>
</dbReference>
<dbReference type="PANTHER" id="PTHR33445">
    <property type="entry name" value="ATP SYNTHASE SUBUNIT B', CHLOROPLASTIC"/>
    <property type="match status" value="1"/>
</dbReference>
<dbReference type="Pfam" id="PF00430">
    <property type="entry name" value="ATP-synt_B"/>
    <property type="match status" value="1"/>
</dbReference>
<dbReference type="SUPFAM" id="SSF81573">
    <property type="entry name" value="F1F0 ATP synthase subunit B, membrane domain"/>
    <property type="match status" value="1"/>
</dbReference>
<proteinExistence type="inferred from homology"/>